<accession>A9L5I4</accession>
<sequence length="203" mass="21672">MSPLTQTLLMILAAYLAGSISSAVLVCRMRGLPDPRLQGSGNPGATNVLRIGGASSAAMVLFFDMLKGAVPSYLAYLMGIDAVSLGLIAIAACLGHIYPVFFGFKGGKGVATAFGAMAPIGDDLAICLMASWVVLLLISRYSSLAAILTALLAPLYTWWLDDRFTIPVAMLSTLIIIRHKDNIQRLLKGEESKVSRKKRPKKS</sequence>
<keyword id="KW-0997">Cell inner membrane</keyword>
<keyword id="KW-1003">Cell membrane</keyword>
<keyword id="KW-0444">Lipid biosynthesis</keyword>
<keyword id="KW-0443">Lipid metabolism</keyword>
<keyword id="KW-0472">Membrane</keyword>
<keyword id="KW-0594">Phospholipid biosynthesis</keyword>
<keyword id="KW-1208">Phospholipid metabolism</keyword>
<keyword id="KW-0808">Transferase</keyword>
<keyword id="KW-0812">Transmembrane</keyword>
<keyword id="KW-1133">Transmembrane helix</keyword>
<feature type="chain" id="PRO_1000084394" description="Glycerol-3-phosphate acyltransferase">
    <location>
        <begin position="1"/>
        <end position="203"/>
    </location>
</feature>
<feature type="transmembrane region" description="Helical" evidence="1">
    <location>
        <begin position="7"/>
        <end position="27"/>
    </location>
</feature>
<feature type="transmembrane region" description="Helical" evidence="1">
    <location>
        <begin position="82"/>
        <end position="102"/>
    </location>
</feature>
<feature type="transmembrane region" description="Helical" evidence="1">
    <location>
        <begin position="118"/>
        <end position="138"/>
    </location>
</feature>
<feature type="transmembrane region" description="Helical" evidence="1">
    <location>
        <begin position="141"/>
        <end position="161"/>
    </location>
</feature>
<dbReference type="EC" id="2.3.1.275" evidence="1"/>
<dbReference type="EMBL" id="CP000891">
    <property type="protein sequence ID" value="ABX48401.1"/>
    <property type="molecule type" value="Genomic_DNA"/>
</dbReference>
<dbReference type="RefSeq" id="WP_006080727.1">
    <property type="nucleotide sequence ID" value="NC_009997.1"/>
</dbReference>
<dbReference type="SMR" id="A9L5I4"/>
<dbReference type="GeneID" id="11771502"/>
<dbReference type="KEGG" id="sbn:Sbal195_1226"/>
<dbReference type="HOGENOM" id="CLU_081254_0_2_6"/>
<dbReference type="UniPathway" id="UPA00085"/>
<dbReference type="Proteomes" id="UP000000770">
    <property type="component" value="Chromosome"/>
</dbReference>
<dbReference type="GO" id="GO:0005886">
    <property type="term" value="C:plasma membrane"/>
    <property type="evidence" value="ECO:0007669"/>
    <property type="project" value="UniProtKB-SubCell"/>
</dbReference>
<dbReference type="GO" id="GO:0043772">
    <property type="term" value="F:acyl-phosphate glycerol-3-phosphate acyltransferase activity"/>
    <property type="evidence" value="ECO:0007669"/>
    <property type="project" value="UniProtKB-UniRule"/>
</dbReference>
<dbReference type="GO" id="GO:0008654">
    <property type="term" value="P:phospholipid biosynthetic process"/>
    <property type="evidence" value="ECO:0007669"/>
    <property type="project" value="UniProtKB-UniRule"/>
</dbReference>
<dbReference type="HAMAP" id="MF_01043">
    <property type="entry name" value="PlsY"/>
    <property type="match status" value="1"/>
</dbReference>
<dbReference type="InterPro" id="IPR003811">
    <property type="entry name" value="G3P_acylTferase_PlsY"/>
</dbReference>
<dbReference type="NCBIfam" id="TIGR00023">
    <property type="entry name" value="glycerol-3-phosphate 1-O-acyltransferase PlsY"/>
    <property type="match status" value="1"/>
</dbReference>
<dbReference type="PANTHER" id="PTHR30309:SF0">
    <property type="entry name" value="GLYCEROL-3-PHOSPHATE ACYLTRANSFERASE-RELATED"/>
    <property type="match status" value="1"/>
</dbReference>
<dbReference type="PANTHER" id="PTHR30309">
    <property type="entry name" value="INNER MEMBRANE PROTEIN YGIH"/>
    <property type="match status" value="1"/>
</dbReference>
<dbReference type="Pfam" id="PF02660">
    <property type="entry name" value="G3P_acyltransf"/>
    <property type="match status" value="1"/>
</dbReference>
<dbReference type="SMART" id="SM01207">
    <property type="entry name" value="G3P_acyltransf"/>
    <property type="match status" value="1"/>
</dbReference>
<name>PLSY_SHEB9</name>
<evidence type="ECO:0000255" key="1">
    <source>
        <dbReference type="HAMAP-Rule" id="MF_01043"/>
    </source>
</evidence>
<comment type="function">
    <text evidence="1">Catalyzes the transfer of an acyl group from acyl-phosphate (acyl-PO(4)) to glycerol-3-phosphate (G3P) to form lysophosphatidic acid (LPA). This enzyme utilizes acyl-phosphate as fatty acyl donor, but not acyl-CoA or acyl-ACP.</text>
</comment>
<comment type="catalytic activity">
    <reaction evidence="1">
        <text>an acyl phosphate + sn-glycerol 3-phosphate = a 1-acyl-sn-glycero-3-phosphate + phosphate</text>
        <dbReference type="Rhea" id="RHEA:34075"/>
        <dbReference type="ChEBI" id="CHEBI:43474"/>
        <dbReference type="ChEBI" id="CHEBI:57597"/>
        <dbReference type="ChEBI" id="CHEBI:57970"/>
        <dbReference type="ChEBI" id="CHEBI:59918"/>
        <dbReference type="EC" id="2.3.1.275"/>
    </reaction>
</comment>
<comment type="pathway">
    <text evidence="1">Lipid metabolism; phospholipid metabolism.</text>
</comment>
<comment type="subunit">
    <text evidence="1">Probably interacts with PlsX.</text>
</comment>
<comment type="subcellular location">
    <subcellularLocation>
        <location evidence="1">Cell inner membrane</location>
        <topology evidence="1">Multi-pass membrane protein</topology>
    </subcellularLocation>
</comment>
<comment type="similarity">
    <text evidence="1">Belongs to the PlsY family.</text>
</comment>
<protein>
    <recommendedName>
        <fullName evidence="1">Glycerol-3-phosphate acyltransferase</fullName>
    </recommendedName>
    <alternativeName>
        <fullName evidence="1">Acyl-PO4 G3P acyltransferase</fullName>
    </alternativeName>
    <alternativeName>
        <fullName evidence="1">Acyl-phosphate--glycerol-3-phosphate acyltransferase</fullName>
    </alternativeName>
    <alternativeName>
        <fullName evidence="1">G3P acyltransferase</fullName>
        <shortName evidence="1">GPAT</shortName>
        <ecNumber evidence="1">2.3.1.275</ecNumber>
    </alternativeName>
    <alternativeName>
        <fullName evidence="1">Lysophosphatidic acid synthase</fullName>
        <shortName evidence="1">LPA synthase</shortName>
    </alternativeName>
</protein>
<organism>
    <name type="scientific">Shewanella baltica (strain OS195)</name>
    <dbReference type="NCBI Taxonomy" id="399599"/>
    <lineage>
        <taxon>Bacteria</taxon>
        <taxon>Pseudomonadati</taxon>
        <taxon>Pseudomonadota</taxon>
        <taxon>Gammaproteobacteria</taxon>
        <taxon>Alteromonadales</taxon>
        <taxon>Shewanellaceae</taxon>
        <taxon>Shewanella</taxon>
    </lineage>
</organism>
<reference key="1">
    <citation type="submission" date="2007-11" db="EMBL/GenBank/DDBJ databases">
        <title>Complete sequence of chromosome of Shewanella baltica OS195.</title>
        <authorList>
            <consortium name="US DOE Joint Genome Institute"/>
            <person name="Copeland A."/>
            <person name="Lucas S."/>
            <person name="Lapidus A."/>
            <person name="Barry K."/>
            <person name="Glavina del Rio T."/>
            <person name="Dalin E."/>
            <person name="Tice H."/>
            <person name="Pitluck S."/>
            <person name="Chain P."/>
            <person name="Malfatti S."/>
            <person name="Shin M."/>
            <person name="Vergez L."/>
            <person name="Schmutz J."/>
            <person name="Larimer F."/>
            <person name="Land M."/>
            <person name="Hauser L."/>
            <person name="Kyrpides N."/>
            <person name="Kim E."/>
            <person name="Brettar I."/>
            <person name="Rodrigues J."/>
            <person name="Konstantinidis K."/>
            <person name="Klappenbach J."/>
            <person name="Hofle M."/>
            <person name="Tiedje J."/>
            <person name="Richardson P."/>
        </authorList>
    </citation>
    <scope>NUCLEOTIDE SEQUENCE [LARGE SCALE GENOMIC DNA]</scope>
    <source>
        <strain>OS195</strain>
    </source>
</reference>
<proteinExistence type="inferred from homology"/>
<gene>
    <name evidence="1" type="primary">plsY</name>
    <name type="ordered locus">Sbal195_1226</name>
</gene>